<accession>Q5R924</accession>
<name>RS20_PONAB</name>
<gene>
    <name type="primary">RPS20</name>
</gene>
<dbReference type="EMBL" id="CR859572">
    <property type="protein sequence ID" value="CAH91736.1"/>
    <property type="molecule type" value="mRNA"/>
</dbReference>
<dbReference type="RefSeq" id="NP_001127456.1">
    <property type="nucleotide sequence ID" value="NM_001133984.1"/>
</dbReference>
<dbReference type="SMR" id="Q5R924"/>
<dbReference type="STRING" id="9601.ENSPPYP00000020858"/>
<dbReference type="GeneID" id="100174529"/>
<dbReference type="CTD" id="6224"/>
<dbReference type="eggNOG" id="KOG0900">
    <property type="taxonomic scope" value="Eukaryota"/>
</dbReference>
<dbReference type="InParanoid" id="Q5R924"/>
<dbReference type="OrthoDB" id="9512708at2759"/>
<dbReference type="Proteomes" id="UP000001595">
    <property type="component" value="Unplaced"/>
</dbReference>
<dbReference type="GO" id="GO:0022626">
    <property type="term" value="C:cytosolic ribosome"/>
    <property type="evidence" value="ECO:0007669"/>
    <property type="project" value="UniProtKB-ARBA"/>
</dbReference>
<dbReference type="GO" id="GO:0015935">
    <property type="term" value="C:small ribosomal subunit"/>
    <property type="evidence" value="ECO:0007669"/>
    <property type="project" value="InterPro"/>
</dbReference>
<dbReference type="GO" id="GO:0003723">
    <property type="term" value="F:RNA binding"/>
    <property type="evidence" value="ECO:0007669"/>
    <property type="project" value="InterPro"/>
</dbReference>
<dbReference type="GO" id="GO:0003735">
    <property type="term" value="F:structural constituent of ribosome"/>
    <property type="evidence" value="ECO:0007669"/>
    <property type="project" value="InterPro"/>
</dbReference>
<dbReference type="GO" id="GO:0006412">
    <property type="term" value="P:translation"/>
    <property type="evidence" value="ECO:0007669"/>
    <property type="project" value="InterPro"/>
</dbReference>
<dbReference type="FunFam" id="3.30.70.600:FF:000011">
    <property type="entry name" value="Uncharacterized protein"/>
    <property type="match status" value="1"/>
</dbReference>
<dbReference type="Gene3D" id="3.30.70.600">
    <property type="entry name" value="Ribosomal protein S10 domain"/>
    <property type="match status" value="1"/>
</dbReference>
<dbReference type="HAMAP" id="MF_00508">
    <property type="entry name" value="Ribosomal_uS10"/>
    <property type="match status" value="1"/>
</dbReference>
<dbReference type="InterPro" id="IPR001848">
    <property type="entry name" value="Ribosomal_uS10"/>
</dbReference>
<dbReference type="InterPro" id="IPR018268">
    <property type="entry name" value="Ribosomal_uS10_CS"/>
</dbReference>
<dbReference type="InterPro" id="IPR027486">
    <property type="entry name" value="Ribosomal_uS10_dom"/>
</dbReference>
<dbReference type="InterPro" id="IPR036838">
    <property type="entry name" value="Ribosomal_uS10_dom_sf"/>
</dbReference>
<dbReference type="InterPro" id="IPR005729">
    <property type="entry name" value="Ribosomal_uS10_euk/arc"/>
</dbReference>
<dbReference type="NCBIfam" id="TIGR01046">
    <property type="entry name" value="uS10_euk_arch"/>
    <property type="match status" value="1"/>
</dbReference>
<dbReference type="PANTHER" id="PTHR11700">
    <property type="entry name" value="30S RIBOSOMAL PROTEIN S10 FAMILY MEMBER"/>
    <property type="match status" value="1"/>
</dbReference>
<dbReference type="Pfam" id="PF00338">
    <property type="entry name" value="Ribosomal_S10"/>
    <property type="match status" value="1"/>
</dbReference>
<dbReference type="PRINTS" id="PR00971">
    <property type="entry name" value="RIBOSOMALS10"/>
</dbReference>
<dbReference type="SMART" id="SM01403">
    <property type="entry name" value="Ribosomal_S10"/>
    <property type="match status" value="1"/>
</dbReference>
<dbReference type="SUPFAM" id="SSF54999">
    <property type="entry name" value="Ribosomal protein S10"/>
    <property type="match status" value="1"/>
</dbReference>
<dbReference type="PROSITE" id="PS00361">
    <property type="entry name" value="RIBOSOMAL_S10"/>
    <property type="match status" value="1"/>
</dbReference>
<organism>
    <name type="scientific">Pongo abelii</name>
    <name type="common">Sumatran orangutan</name>
    <name type="synonym">Pongo pygmaeus abelii</name>
    <dbReference type="NCBI Taxonomy" id="9601"/>
    <lineage>
        <taxon>Eukaryota</taxon>
        <taxon>Metazoa</taxon>
        <taxon>Chordata</taxon>
        <taxon>Craniata</taxon>
        <taxon>Vertebrata</taxon>
        <taxon>Euteleostomi</taxon>
        <taxon>Mammalia</taxon>
        <taxon>Eutheria</taxon>
        <taxon>Euarchontoglires</taxon>
        <taxon>Primates</taxon>
        <taxon>Haplorrhini</taxon>
        <taxon>Catarrhini</taxon>
        <taxon>Hominidae</taxon>
        <taxon>Pongo</taxon>
    </lineage>
</organism>
<reference key="1">
    <citation type="submission" date="2004-11" db="EMBL/GenBank/DDBJ databases">
        <authorList>
            <consortium name="The German cDNA consortium"/>
        </authorList>
    </citation>
    <scope>NUCLEOTIDE SEQUENCE [LARGE SCALE MRNA]</scope>
    <source>
        <tissue>Heart</tissue>
    </source>
</reference>
<keyword id="KW-0007">Acetylation</keyword>
<keyword id="KW-0963">Cytoplasm</keyword>
<keyword id="KW-1017">Isopeptide bond</keyword>
<keyword id="KW-0597">Phosphoprotein</keyword>
<keyword id="KW-1185">Reference proteome</keyword>
<keyword id="KW-0687">Ribonucleoprotein</keyword>
<keyword id="KW-0689">Ribosomal protein</keyword>
<keyword id="KW-0832">Ubl conjugation</keyword>
<sequence length="119" mass="13274">MAFKDTGKTPVEPEVAIHRIRITLTSRNVKSLEKVCADLIRGAKEKNLKVKGPVRMPTKTLRITTGKTPCGEGSKTWDRFQMRIHKRLIDLHSPSEIVKQITSISIEPGVEVEVTIADA</sequence>
<protein>
    <recommendedName>
        <fullName evidence="3">Small ribosomal subunit protein uS10</fullName>
    </recommendedName>
    <alternativeName>
        <fullName>40S ribosomal protein S20</fullName>
    </alternativeName>
</protein>
<feature type="initiator methionine" description="Removed" evidence="1">
    <location>
        <position position="1"/>
    </location>
</feature>
<feature type="chain" id="PRO_0000273964" description="Small ribosomal subunit protein uS10">
    <location>
        <begin position="2"/>
        <end position="119"/>
    </location>
</feature>
<feature type="modified residue" description="N-acetylalanine" evidence="1">
    <location>
        <position position="2"/>
    </location>
</feature>
<feature type="modified residue" description="N6-succinyllysine; alternate" evidence="2">
    <location>
        <position position="8"/>
    </location>
</feature>
<feature type="modified residue" description="Phosphothreonine" evidence="1">
    <location>
        <position position="9"/>
    </location>
</feature>
<feature type="modified residue" description="N6-acetyllysine" evidence="2">
    <location>
        <position position="34"/>
    </location>
</feature>
<feature type="modified residue" description="N6-acetyllysine" evidence="2">
    <location>
        <position position="75"/>
    </location>
</feature>
<feature type="modified residue" description="Phosphoserine" evidence="1">
    <location>
        <position position="93"/>
    </location>
</feature>
<feature type="cross-link" description="Glycyl lysine isopeptide (Lys-Gly) (interchain with G-Cter in ubiquitin)" evidence="1">
    <location>
        <position position="4"/>
    </location>
</feature>
<feature type="cross-link" description="Glycyl lysine isopeptide (Lys-Gly) (interchain with G-Cter in ubiquitin); alternate" evidence="1">
    <location>
        <position position="8"/>
    </location>
</feature>
<evidence type="ECO:0000250" key="1">
    <source>
        <dbReference type="UniProtKB" id="P60866"/>
    </source>
</evidence>
<evidence type="ECO:0000250" key="2">
    <source>
        <dbReference type="UniProtKB" id="P60867"/>
    </source>
</evidence>
<evidence type="ECO:0000305" key="3"/>
<proteinExistence type="inferred from homology"/>
<comment type="function">
    <text evidence="1">Component of the small ribosomal subunit. The ribosome is a large ribonucleoprotein complex responsible for the synthesis of proteins in the cell.</text>
</comment>
<comment type="subunit">
    <text evidence="1">Component of the 40S small ribosomal subunit.</text>
</comment>
<comment type="subcellular location">
    <subcellularLocation>
        <location evidence="1">Cytoplasm</location>
    </subcellularLocation>
</comment>
<comment type="PTM">
    <text evidence="1">Polyubiquitinated by ZNF598 via 'Lys-63'-linked ubiquitin chains when a ribosome has stalled, initiating the ribosome quality control (RQC) pathway to degrade the potentially detrimental aberrant nascent polypeptide. Deubiquitinated by OTUD3 and USP21, antagonizing ZNF598 activity.</text>
</comment>
<comment type="PTM">
    <text evidence="2">Ufmylated by UFL1.</text>
</comment>
<comment type="similarity">
    <text evidence="3">Belongs to the universal ribosomal protein uS10 family.</text>
</comment>